<protein>
    <recommendedName>
        <fullName>Response regulator SaeR</fullName>
    </recommendedName>
    <alternativeName>
        <fullName>Staphylococcus exoprotein expression protein R</fullName>
    </alternativeName>
</protein>
<proteinExistence type="inferred from homology"/>
<keyword id="KW-0963">Cytoplasm</keyword>
<keyword id="KW-0238">DNA-binding</keyword>
<keyword id="KW-0597">Phosphoprotein</keyword>
<keyword id="KW-0716">Sensory transduction</keyword>
<keyword id="KW-0804">Transcription</keyword>
<keyword id="KW-0805">Transcription regulation</keyword>
<keyword id="KW-0902">Two-component regulatory system</keyword>
<keyword id="KW-0843">Virulence</keyword>
<accession>Q6GIT6</accession>
<organism>
    <name type="scientific">Staphylococcus aureus (strain MRSA252)</name>
    <dbReference type="NCBI Taxonomy" id="282458"/>
    <lineage>
        <taxon>Bacteria</taxon>
        <taxon>Bacillati</taxon>
        <taxon>Bacillota</taxon>
        <taxon>Bacilli</taxon>
        <taxon>Bacillales</taxon>
        <taxon>Staphylococcaceae</taxon>
        <taxon>Staphylococcus</taxon>
    </lineage>
</organism>
<reference key="1">
    <citation type="journal article" date="2004" name="Proc. Natl. Acad. Sci. U.S.A.">
        <title>Complete genomes of two clinical Staphylococcus aureus strains: evidence for the rapid evolution of virulence and drug resistance.</title>
        <authorList>
            <person name="Holden M.T.G."/>
            <person name="Feil E.J."/>
            <person name="Lindsay J.A."/>
            <person name="Peacock S.J."/>
            <person name="Day N.P.J."/>
            <person name="Enright M.C."/>
            <person name="Foster T.J."/>
            <person name="Moore C.E."/>
            <person name="Hurst L."/>
            <person name="Atkin R."/>
            <person name="Barron A."/>
            <person name="Bason N."/>
            <person name="Bentley S.D."/>
            <person name="Chillingworth C."/>
            <person name="Chillingworth T."/>
            <person name="Churcher C."/>
            <person name="Clark L."/>
            <person name="Corton C."/>
            <person name="Cronin A."/>
            <person name="Doggett J."/>
            <person name="Dowd L."/>
            <person name="Feltwell T."/>
            <person name="Hance Z."/>
            <person name="Harris B."/>
            <person name="Hauser H."/>
            <person name="Holroyd S."/>
            <person name="Jagels K."/>
            <person name="James K.D."/>
            <person name="Lennard N."/>
            <person name="Line A."/>
            <person name="Mayes R."/>
            <person name="Moule S."/>
            <person name="Mungall K."/>
            <person name="Ormond D."/>
            <person name="Quail M.A."/>
            <person name="Rabbinowitsch E."/>
            <person name="Rutherford K.M."/>
            <person name="Sanders M."/>
            <person name="Sharp S."/>
            <person name="Simmonds M."/>
            <person name="Stevens K."/>
            <person name="Whitehead S."/>
            <person name="Barrell B.G."/>
            <person name="Spratt B.G."/>
            <person name="Parkhill J."/>
        </authorList>
    </citation>
    <scope>NUCLEOTIDE SEQUENCE [LARGE SCALE GENOMIC DNA]</scope>
    <source>
        <strain>MRSA252</strain>
    </source>
</reference>
<evidence type="ECO:0000250" key="1"/>
<evidence type="ECO:0000255" key="2">
    <source>
        <dbReference type="PROSITE-ProRule" id="PRU00169"/>
    </source>
</evidence>
<evidence type="ECO:0000255" key="3">
    <source>
        <dbReference type="PROSITE-ProRule" id="PRU01091"/>
    </source>
</evidence>
<dbReference type="EMBL" id="BX571856">
    <property type="protein sequence ID" value="CAG39769.1"/>
    <property type="molecule type" value="Genomic_DNA"/>
</dbReference>
<dbReference type="RefSeq" id="WP_000149344.1">
    <property type="nucleotide sequence ID" value="NC_002952.2"/>
</dbReference>
<dbReference type="SMR" id="Q6GIT6"/>
<dbReference type="KEGG" id="sar:SAR0759"/>
<dbReference type="HOGENOM" id="CLU_000445_30_4_9"/>
<dbReference type="Proteomes" id="UP000000596">
    <property type="component" value="Chromosome"/>
</dbReference>
<dbReference type="GO" id="GO:0005829">
    <property type="term" value="C:cytosol"/>
    <property type="evidence" value="ECO:0007669"/>
    <property type="project" value="TreeGrafter"/>
</dbReference>
<dbReference type="GO" id="GO:0032993">
    <property type="term" value="C:protein-DNA complex"/>
    <property type="evidence" value="ECO:0007669"/>
    <property type="project" value="TreeGrafter"/>
</dbReference>
<dbReference type="GO" id="GO:0000156">
    <property type="term" value="F:phosphorelay response regulator activity"/>
    <property type="evidence" value="ECO:0007669"/>
    <property type="project" value="TreeGrafter"/>
</dbReference>
<dbReference type="GO" id="GO:0000976">
    <property type="term" value="F:transcription cis-regulatory region binding"/>
    <property type="evidence" value="ECO:0007669"/>
    <property type="project" value="TreeGrafter"/>
</dbReference>
<dbReference type="GO" id="GO:0006355">
    <property type="term" value="P:regulation of DNA-templated transcription"/>
    <property type="evidence" value="ECO:0007669"/>
    <property type="project" value="InterPro"/>
</dbReference>
<dbReference type="CDD" id="cd17574">
    <property type="entry name" value="REC_OmpR"/>
    <property type="match status" value="1"/>
</dbReference>
<dbReference type="CDD" id="cd00383">
    <property type="entry name" value="trans_reg_C"/>
    <property type="match status" value="1"/>
</dbReference>
<dbReference type="FunFam" id="1.10.10.10:FF:000018">
    <property type="entry name" value="DNA-binding response regulator ResD"/>
    <property type="match status" value="1"/>
</dbReference>
<dbReference type="Gene3D" id="3.40.50.2300">
    <property type="match status" value="1"/>
</dbReference>
<dbReference type="Gene3D" id="6.10.250.690">
    <property type="match status" value="1"/>
</dbReference>
<dbReference type="Gene3D" id="1.10.10.10">
    <property type="entry name" value="Winged helix-like DNA-binding domain superfamily/Winged helix DNA-binding domain"/>
    <property type="match status" value="1"/>
</dbReference>
<dbReference type="InterPro" id="IPR011006">
    <property type="entry name" value="CheY-like_superfamily"/>
</dbReference>
<dbReference type="InterPro" id="IPR001867">
    <property type="entry name" value="OmpR/PhoB-type_DNA-bd"/>
</dbReference>
<dbReference type="InterPro" id="IPR001789">
    <property type="entry name" value="Sig_transdc_resp-reg_receiver"/>
</dbReference>
<dbReference type="InterPro" id="IPR039420">
    <property type="entry name" value="WalR-like"/>
</dbReference>
<dbReference type="InterPro" id="IPR036388">
    <property type="entry name" value="WH-like_DNA-bd_sf"/>
</dbReference>
<dbReference type="PANTHER" id="PTHR48111">
    <property type="entry name" value="REGULATOR OF RPOS"/>
    <property type="match status" value="1"/>
</dbReference>
<dbReference type="PANTHER" id="PTHR48111:SF2">
    <property type="entry name" value="RESPONSE REGULATOR SAER"/>
    <property type="match status" value="1"/>
</dbReference>
<dbReference type="Pfam" id="PF00072">
    <property type="entry name" value="Response_reg"/>
    <property type="match status" value="1"/>
</dbReference>
<dbReference type="Pfam" id="PF00486">
    <property type="entry name" value="Trans_reg_C"/>
    <property type="match status" value="1"/>
</dbReference>
<dbReference type="SMART" id="SM00448">
    <property type="entry name" value="REC"/>
    <property type="match status" value="1"/>
</dbReference>
<dbReference type="SMART" id="SM00862">
    <property type="entry name" value="Trans_reg_C"/>
    <property type="match status" value="1"/>
</dbReference>
<dbReference type="SUPFAM" id="SSF52172">
    <property type="entry name" value="CheY-like"/>
    <property type="match status" value="1"/>
</dbReference>
<dbReference type="PROSITE" id="PS51755">
    <property type="entry name" value="OMPR_PHOB"/>
    <property type="match status" value="1"/>
</dbReference>
<dbReference type="PROSITE" id="PS50110">
    <property type="entry name" value="RESPONSE_REGULATORY"/>
    <property type="match status" value="1"/>
</dbReference>
<comment type="function">
    <text evidence="1">Member of the two-component regulatory system SaeR/SaeS involved in the regulation of staphylococcal virulence factors in a strain-dependent fashion. Probably functions as a transcriptional regulator via a specific DNA-binding domain, recognizing motifs near the promoter sequences of target genes (By similarity).</text>
</comment>
<comment type="subcellular location">
    <subcellularLocation>
        <location evidence="1">Cytoplasm</location>
    </subcellularLocation>
</comment>
<comment type="PTM">
    <text evidence="1">Phosphorylated by SaeS.</text>
</comment>
<sequence length="228" mass="26858">MTHLLIVDDEQDIVDICQTYFEYEGYKVTTTTSGKEAISLLSNDIDIMVLDIMMPEVNGYDIVKEMKRQKLDIPFIYLTAKTQEHDTIYALTLGADDYVKKPFSPRELVLRINNLLTRMKKYHHQPVEQLSFDELTLINLSKVVTVNGHEVPMRIKEFELLWYLASRENEVISKSELLEKVWGYDYYEDANTVNVHIHRIREKLEKESFTTYTITTVWGLGYKFERSR</sequence>
<name>SAER_STAAR</name>
<feature type="chain" id="PRO_0000295920" description="Response regulator SaeR">
    <location>
        <begin position="1"/>
        <end position="228"/>
    </location>
</feature>
<feature type="domain" description="Response regulatory" evidence="2">
    <location>
        <begin position="3"/>
        <end position="116"/>
    </location>
</feature>
<feature type="DNA-binding region" description="OmpR/PhoB-type" evidence="3">
    <location>
        <begin position="127"/>
        <end position="226"/>
    </location>
</feature>
<feature type="modified residue" description="4-aspartylphosphate" evidence="2">
    <location>
        <position position="51"/>
    </location>
</feature>
<gene>
    <name type="primary">saeR</name>
    <name type="ordered locus">SAR0759</name>
</gene>